<evidence type="ECO:0000255" key="1">
    <source>
        <dbReference type="HAMAP-Rule" id="MF_01588"/>
    </source>
</evidence>
<accession>B8D122</accession>
<name>DNLJ_HALOH</name>
<feature type="chain" id="PRO_0000380394" description="DNA ligase">
    <location>
        <begin position="1"/>
        <end position="670"/>
    </location>
</feature>
<feature type="domain" description="BRCT" evidence="1">
    <location>
        <begin position="587"/>
        <end position="670"/>
    </location>
</feature>
<feature type="active site" description="N6-AMP-lysine intermediate" evidence="1">
    <location>
        <position position="115"/>
    </location>
</feature>
<feature type="binding site" evidence="1">
    <location>
        <begin position="33"/>
        <end position="37"/>
    </location>
    <ligand>
        <name>NAD(+)</name>
        <dbReference type="ChEBI" id="CHEBI:57540"/>
    </ligand>
</feature>
<feature type="binding site" evidence="1">
    <location>
        <begin position="82"/>
        <end position="83"/>
    </location>
    <ligand>
        <name>NAD(+)</name>
        <dbReference type="ChEBI" id="CHEBI:57540"/>
    </ligand>
</feature>
<feature type="binding site" evidence="1">
    <location>
        <position position="113"/>
    </location>
    <ligand>
        <name>NAD(+)</name>
        <dbReference type="ChEBI" id="CHEBI:57540"/>
    </ligand>
</feature>
<feature type="binding site" evidence="1">
    <location>
        <position position="136"/>
    </location>
    <ligand>
        <name>NAD(+)</name>
        <dbReference type="ChEBI" id="CHEBI:57540"/>
    </ligand>
</feature>
<feature type="binding site" evidence="1">
    <location>
        <position position="170"/>
    </location>
    <ligand>
        <name>NAD(+)</name>
        <dbReference type="ChEBI" id="CHEBI:57540"/>
    </ligand>
</feature>
<feature type="binding site" evidence="1">
    <location>
        <position position="285"/>
    </location>
    <ligand>
        <name>NAD(+)</name>
        <dbReference type="ChEBI" id="CHEBI:57540"/>
    </ligand>
</feature>
<feature type="binding site" evidence="1">
    <location>
        <position position="309"/>
    </location>
    <ligand>
        <name>NAD(+)</name>
        <dbReference type="ChEBI" id="CHEBI:57540"/>
    </ligand>
</feature>
<feature type="binding site" evidence="1">
    <location>
        <position position="403"/>
    </location>
    <ligand>
        <name>Zn(2+)</name>
        <dbReference type="ChEBI" id="CHEBI:29105"/>
    </ligand>
</feature>
<feature type="binding site" evidence="1">
    <location>
        <position position="406"/>
    </location>
    <ligand>
        <name>Zn(2+)</name>
        <dbReference type="ChEBI" id="CHEBI:29105"/>
    </ligand>
</feature>
<feature type="binding site" evidence="1">
    <location>
        <position position="421"/>
    </location>
    <ligand>
        <name>Zn(2+)</name>
        <dbReference type="ChEBI" id="CHEBI:29105"/>
    </ligand>
</feature>
<feature type="binding site" evidence="1">
    <location>
        <position position="427"/>
    </location>
    <ligand>
        <name>Zn(2+)</name>
        <dbReference type="ChEBI" id="CHEBI:29105"/>
    </ligand>
</feature>
<comment type="function">
    <text evidence="1">DNA ligase that catalyzes the formation of phosphodiester linkages between 5'-phosphoryl and 3'-hydroxyl groups in double-stranded DNA using NAD as a coenzyme and as the energy source for the reaction. It is essential for DNA replication and repair of damaged DNA.</text>
</comment>
<comment type="catalytic activity">
    <reaction evidence="1">
        <text>NAD(+) + (deoxyribonucleotide)n-3'-hydroxyl + 5'-phospho-(deoxyribonucleotide)m = (deoxyribonucleotide)n+m + AMP + beta-nicotinamide D-nucleotide.</text>
        <dbReference type="EC" id="6.5.1.2"/>
    </reaction>
</comment>
<comment type="cofactor">
    <cofactor evidence="1">
        <name>Mg(2+)</name>
        <dbReference type="ChEBI" id="CHEBI:18420"/>
    </cofactor>
    <cofactor evidence="1">
        <name>Mn(2+)</name>
        <dbReference type="ChEBI" id="CHEBI:29035"/>
    </cofactor>
</comment>
<comment type="similarity">
    <text evidence="1">Belongs to the NAD-dependent DNA ligase family. LigA subfamily.</text>
</comment>
<proteinExistence type="inferred from homology"/>
<sequence>MASKVEQEIRDLREKIRYHEYRYYVLDDPEISDAEFDELIQRLIDLEEKHPGLVTPDSPTQRVGGEPLDKFDKVEHRVPMLSLGNAFNEGDLTNFARRIYRLLDTGKIDFVVEHKIDGLSAILTYQGGRLIRGATRGNGVVGEDVTANIKTIPSVPLRLKKDVDIEVRGEVYIKKDDFSKLNERRLKKGEEPFANPRNAAAGSIRQLDPRLAAARPLSFIAYDVVAYEGEGLQTHVGALELLRELGFKVNWYRKCDDITEVVNICKDWVDKREELPFEIDGMVIKVNELGLREQLGATAKSPRWAIAYKFPAQQKTTVVKDIIISVGRTGALTPTAVLEPVEVDGSTVSRATLHNEDEIRRKDVRIGDHVLVQKAGDVIPEVVKVIKSKRDGSEQIFHMPETCPACGGEVVREEGEAVLRCVNVTGCPAQRREGILHFVSRNAMNIDGVGPALIDQLLEKGLIEDYADLYYLKKEDLIPLERMGEKSATNAIEAIRASKDRPLFRVIFALGIRHVGLGVARVLTEKYRSLSDLMRASGEELVAIDEIGPTIARSIIEFFKEPHNREVINKLKEAGVRLEEKENGKEEQNLYLSGKTFVFTGKLDGFTRSEARDKVIAAGGKVTSSVSRKTDYVVVGDSPGSKYDKARELGVTILDEDKFKEVLKAGDNNG</sequence>
<organism>
    <name type="scientific">Halothermothrix orenii (strain H 168 / OCM 544 / DSM 9562)</name>
    <dbReference type="NCBI Taxonomy" id="373903"/>
    <lineage>
        <taxon>Bacteria</taxon>
        <taxon>Bacillati</taxon>
        <taxon>Bacillota</taxon>
        <taxon>Clostridia</taxon>
        <taxon>Halanaerobiales</taxon>
        <taxon>Halothermotrichaceae</taxon>
        <taxon>Halothermothrix</taxon>
    </lineage>
</organism>
<dbReference type="EC" id="6.5.1.2" evidence="1"/>
<dbReference type="EMBL" id="CP001098">
    <property type="protein sequence ID" value="ACL68991.1"/>
    <property type="molecule type" value="Genomic_DNA"/>
</dbReference>
<dbReference type="RefSeq" id="WP_012635189.1">
    <property type="nucleotide sequence ID" value="NC_011899.1"/>
</dbReference>
<dbReference type="SMR" id="B8D122"/>
<dbReference type="STRING" id="373903.Hore_02300"/>
<dbReference type="KEGG" id="hor:Hore_02300"/>
<dbReference type="eggNOG" id="COG0272">
    <property type="taxonomic scope" value="Bacteria"/>
</dbReference>
<dbReference type="HOGENOM" id="CLU_007764_2_1_9"/>
<dbReference type="OrthoDB" id="9759736at2"/>
<dbReference type="Proteomes" id="UP000000719">
    <property type="component" value="Chromosome"/>
</dbReference>
<dbReference type="GO" id="GO:0005829">
    <property type="term" value="C:cytosol"/>
    <property type="evidence" value="ECO:0007669"/>
    <property type="project" value="TreeGrafter"/>
</dbReference>
<dbReference type="GO" id="GO:0003677">
    <property type="term" value="F:DNA binding"/>
    <property type="evidence" value="ECO:0007669"/>
    <property type="project" value="InterPro"/>
</dbReference>
<dbReference type="GO" id="GO:0003911">
    <property type="term" value="F:DNA ligase (NAD+) activity"/>
    <property type="evidence" value="ECO:0007669"/>
    <property type="project" value="UniProtKB-UniRule"/>
</dbReference>
<dbReference type="GO" id="GO:0046872">
    <property type="term" value="F:metal ion binding"/>
    <property type="evidence" value="ECO:0007669"/>
    <property type="project" value="UniProtKB-KW"/>
</dbReference>
<dbReference type="GO" id="GO:0006281">
    <property type="term" value="P:DNA repair"/>
    <property type="evidence" value="ECO:0007669"/>
    <property type="project" value="UniProtKB-KW"/>
</dbReference>
<dbReference type="GO" id="GO:0006260">
    <property type="term" value="P:DNA replication"/>
    <property type="evidence" value="ECO:0007669"/>
    <property type="project" value="UniProtKB-KW"/>
</dbReference>
<dbReference type="CDD" id="cd17748">
    <property type="entry name" value="BRCT_DNA_ligase_like"/>
    <property type="match status" value="1"/>
</dbReference>
<dbReference type="CDD" id="cd00114">
    <property type="entry name" value="LIGANc"/>
    <property type="match status" value="1"/>
</dbReference>
<dbReference type="FunFam" id="1.10.150.20:FF:000006">
    <property type="entry name" value="DNA ligase"/>
    <property type="match status" value="1"/>
</dbReference>
<dbReference type="FunFam" id="1.10.150.20:FF:000007">
    <property type="entry name" value="DNA ligase"/>
    <property type="match status" value="1"/>
</dbReference>
<dbReference type="FunFam" id="1.10.287.610:FF:000002">
    <property type="entry name" value="DNA ligase"/>
    <property type="match status" value="1"/>
</dbReference>
<dbReference type="FunFam" id="2.40.50.140:FF:000012">
    <property type="entry name" value="DNA ligase"/>
    <property type="match status" value="1"/>
</dbReference>
<dbReference type="FunFam" id="3.30.470.30:FF:000001">
    <property type="entry name" value="DNA ligase"/>
    <property type="match status" value="1"/>
</dbReference>
<dbReference type="FunFam" id="3.40.50.10190:FF:000054">
    <property type="entry name" value="DNA ligase"/>
    <property type="match status" value="1"/>
</dbReference>
<dbReference type="Gene3D" id="6.20.10.30">
    <property type="match status" value="1"/>
</dbReference>
<dbReference type="Gene3D" id="1.10.150.20">
    <property type="entry name" value="5' to 3' exonuclease, C-terminal subdomain"/>
    <property type="match status" value="2"/>
</dbReference>
<dbReference type="Gene3D" id="3.40.50.10190">
    <property type="entry name" value="BRCT domain"/>
    <property type="match status" value="1"/>
</dbReference>
<dbReference type="Gene3D" id="3.30.470.30">
    <property type="entry name" value="DNA ligase/mRNA capping enzyme"/>
    <property type="match status" value="1"/>
</dbReference>
<dbReference type="Gene3D" id="1.10.287.610">
    <property type="entry name" value="Helix hairpin bin"/>
    <property type="match status" value="1"/>
</dbReference>
<dbReference type="Gene3D" id="2.40.50.140">
    <property type="entry name" value="Nucleic acid-binding proteins"/>
    <property type="match status" value="1"/>
</dbReference>
<dbReference type="HAMAP" id="MF_01588">
    <property type="entry name" value="DNA_ligase_A"/>
    <property type="match status" value="1"/>
</dbReference>
<dbReference type="InterPro" id="IPR001357">
    <property type="entry name" value="BRCT_dom"/>
</dbReference>
<dbReference type="InterPro" id="IPR036420">
    <property type="entry name" value="BRCT_dom_sf"/>
</dbReference>
<dbReference type="InterPro" id="IPR041663">
    <property type="entry name" value="DisA/LigA_HHH"/>
</dbReference>
<dbReference type="InterPro" id="IPR001679">
    <property type="entry name" value="DNA_ligase"/>
</dbReference>
<dbReference type="InterPro" id="IPR018239">
    <property type="entry name" value="DNA_ligase_AS"/>
</dbReference>
<dbReference type="InterPro" id="IPR033136">
    <property type="entry name" value="DNA_ligase_CS"/>
</dbReference>
<dbReference type="InterPro" id="IPR013839">
    <property type="entry name" value="DNAligase_adenylation"/>
</dbReference>
<dbReference type="InterPro" id="IPR013840">
    <property type="entry name" value="DNAligase_N"/>
</dbReference>
<dbReference type="InterPro" id="IPR003583">
    <property type="entry name" value="Hlx-hairpin-Hlx_DNA-bd_motif"/>
</dbReference>
<dbReference type="InterPro" id="IPR012340">
    <property type="entry name" value="NA-bd_OB-fold"/>
</dbReference>
<dbReference type="InterPro" id="IPR004150">
    <property type="entry name" value="NAD_DNA_ligase_OB"/>
</dbReference>
<dbReference type="InterPro" id="IPR010994">
    <property type="entry name" value="RuvA_2-like"/>
</dbReference>
<dbReference type="InterPro" id="IPR004149">
    <property type="entry name" value="Znf_DNAligase_C4"/>
</dbReference>
<dbReference type="NCBIfam" id="TIGR00575">
    <property type="entry name" value="dnlj"/>
    <property type="match status" value="1"/>
</dbReference>
<dbReference type="NCBIfam" id="NF005932">
    <property type="entry name" value="PRK07956.1"/>
    <property type="match status" value="1"/>
</dbReference>
<dbReference type="PANTHER" id="PTHR23389">
    <property type="entry name" value="CHROMOSOME TRANSMISSION FIDELITY FACTOR 18"/>
    <property type="match status" value="1"/>
</dbReference>
<dbReference type="PANTHER" id="PTHR23389:SF9">
    <property type="entry name" value="DNA LIGASE"/>
    <property type="match status" value="1"/>
</dbReference>
<dbReference type="Pfam" id="PF00533">
    <property type="entry name" value="BRCT"/>
    <property type="match status" value="1"/>
</dbReference>
<dbReference type="Pfam" id="PF01653">
    <property type="entry name" value="DNA_ligase_aden"/>
    <property type="match status" value="1"/>
</dbReference>
<dbReference type="Pfam" id="PF03120">
    <property type="entry name" value="DNA_ligase_OB"/>
    <property type="match status" value="1"/>
</dbReference>
<dbReference type="Pfam" id="PF03119">
    <property type="entry name" value="DNA_ligase_ZBD"/>
    <property type="match status" value="1"/>
</dbReference>
<dbReference type="Pfam" id="PF12826">
    <property type="entry name" value="HHH_2"/>
    <property type="match status" value="1"/>
</dbReference>
<dbReference type="Pfam" id="PF14520">
    <property type="entry name" value="HHH_5"/>
    <property type="match status" value="1"/>
</dbReference>
<dbReference type="Pfam" id="PF22745">
    <property type="entry name" value="Nlig-Ia"/>
    <property type="match status" value="1"/>
</dbReference>
<dbReference type="PIRSF" id="PIRSF001604">
    <property type="entry name" value="LigA"/>
    <property type="match status" value="1"/>
</dbReference>
<dbReference type="SMART" id="SM00292">
    <property type="entry name" value="BRCT"/>
    <property type="match status" value="1"/>
</dbReference>
<dbReference type="SMART" id="SM00278">
    <property type="entry name" value="HhH1"/>
    <property type="match status" value="3"/>
</dbReference>
<dbReference type="SMART" id="SM00532">
    <property type="entry name" value="LIGANc"/>
    <property type="match status" value="1"/>
</dbReference>
<dbReference type="SUPFAM" id="SSF52113">
    <property type="entry name" value="BRCT domain"/>
    <property type="match status" value="1"/>
</dbReference>
<dbReference type="SUPFAM" id="SSF56091">
    <property type="entry name" value="DNA ligase/mRNA capping enzyme, catalytic domain"/>
    <property type="match status" value="1"/>
</dbReference>
<dbReference type="SUPFAM" id="SSF50249">
    <property type="entry name" value="Nucleic acid-binding proteins"/>
    <property type="match status" value="1"/>
</dbReference>
<dbReference type="SUPFAM" id="SSF47781">
    <property type="entry name" value="RuvA domain 2-like"/>
    <property type="match status" value="1"/>
</dbReference>
<dbReference type="PROSITE" id="PS50172">
    <property type="entry name" value="BRCT"/>
    <property type="match status" value="1"/>
</dbReference>
<dbReference type="PROSITE" id="PS01055">
    <property type="entry name" value="DNA_LIGASE_N1"/>
    <property type="match status" value="1"/>
</dbReference>
<dbReference type="PROSITE" id="PS01056">
    <property type="entry name" value="DNA_LIGASE_N2"/>
    <property type="match status" value="1"/>
</dbReference>
<protein>
    <recommendedName>
        <fullName evidence="1">DNA ligase</fullName>
        <ecNumber evidence="1">6.5.1.2</ecNumber>
    </recommendedName>
    <alternativeName>
        <fullName evidence="1">Polydeoxyribonucleotide synthase [NAD(+)]</fullName>
    </alternativeName>
</protein>
<reference key="1">
    <citation type="journal article" date="2009" name="PLoS ONE">
        <title>Genome analysis of the anaerobic thermohalophilic bacterium Halothermothrix orenii.</title>
        <authorList>
            <person name="Mavromatis K."/>
            <person name="Ivanova N."/>
            <person name="Anderson I."/>
            <person name="Lykidis A."/>
            <person name="Hooper S.D."/>
            <person name="Sun H."/>
            <person name="Kunin V."/>
            <person name="Lapidus A."/>
            <person name="Hugenholtz P."/>
            <person name="Patel B."/>
            <person name="Kyrpides N.C."/>
        </authorList>
    </citation>
    <scope>NUCLEOTIDE SEQUENCE [LARGE SCALE GENOMIC DNA]</scope>
    <source>
        <strain>H 168 / OCM 544 / DSM 9562</strain>
    </source>
</reference>
<keyword id="KW-0227">DNA damage</keyword>
<keyword id="KW-0234">DNA repair</keyword>
<keyword id="KW-0235">DNA replication</keyword>
<keyword id="KW-0436">Ligase</keyword>
<keyword id="KW-0460">Magnesium</keyword>
<keyword id="KW-0464">Manganese</keyword>
<keyword id="KW-0479">Metal-binding</keyword>
<keyword id="KW-0520">NAD</keyword>
<keyword id="KW-1185">Reference proteome</keyword>
<keyword id="KW-0862">Zinc</keyword>
<gene>
    <name evidence="1" type="primary">ligA</name>
    <name type="ordered locus">Hore_02300</name>
</gene>